<reference key="1">
    <citation type="journal article" date="2000" name="Nature">
        <title>Sequence and analysis of chromosome 3 of the plant Arabidopsis thaliana.</title>
        <authorList>
            <person name="Salanoubat M."/>
            <person name="Lemcke K."/>
            <person name="Rieger M."/>
            <person name="Ansorge W."/>
            <person name="Unseld M."/>
            <person name="Fartmann B."/>
            <person name="Valle G."/>
            <person name="Bloecker H."/>
            <person name="Perez-Alonso M."/>
            <person name="Obermaier B."/>
            <person name="Delseny M."/>
            <person name="Boutry M."/>
            <person name="Grivell L.A."/>
            <person name="Mache R."/>
            <person name="Puigdomenech P."/>
            <person name="De Simone V."/>
            <person name="Choisne N."/>
            <person name="Artiguenave F."/>
            <person name="Robert C."/>
            <person name="Brottier P."/>
            <person name="Wincker P."/>
            <person name="Cattolico L."/>
            <person name="Weissenbach J."/>
            <person name="Saurin W."/>
            <person name="Quetier F."/>
            <person name="Schaefer M."/>
            <person name="Mueller-Auer S."/>
            <person name="Gabel C."/>
            <person name="Fuchs M."/>
            <person name="Benes V."/>
            <person name="Wurmbach E."/>
            <person name="Drzonek H."/>
            <person name="Erfle H."/>
            <person name="Jordan N."/>
            <person name="Bangert S."/>
            <person name="Wiedelmann R."/>
            <person name="Kranz H."/>
            <person name="Voss H."/>
            <person name="Holland R."/>
            <person name="Brandt P."/>
            <person name="Nyakatura G."/>
            <person name="Vezzi A."/>
            <person name="D'Angelo M."/>
            <person name="Pallavicini A."/>
            <person name="Toppo S."/>
            <person name="Simionati B."/>
            <person name="Conrad A."/>
            <person name="Hornischer K."/>
            <person name="Kauer G."/>
            <person name="Loehnert T.-H."/>
            <person name="Nordsiek G."/>
            <person name="Reichelt J."/>
            <person name="Scharfe M."/>
            <person name="Schoen O."/>
            <person name="Bargues M."/>
            <person name="Terol J."/>
            <person name="Climent J."/>
            <person name="Navarro P."/>
            <person name="Collado C."/>
            <person name="Perez-Perez A."/>
            <person name="Ottenwaelder B."/>
            <person name="Duchemin D."/>
            <person name="Cooke R."/>
            <person name="Laudie M."/>
            <person name="Berger-Llauro C."/>
            <person name="Purnelle B."/>
            <person name="Masuy D."/>
            <person name="de Haan M."/>
            <person name="Maarse A.C."/>
            <person name="Alcaraz J.-P."/>
            <person name="Cottet A."/>
            <person name="Casacuberta E."/>
            <person name="Monfort A."/>
            <person name="Argiriou A."/>
            <person name="Flores M."/>
            <person name="Liguori R."/>
            <person name="Vitale D."/>
            <person name="Mannhaupt G."/>
            <person name="Haase D."/>
            <person name="Schoof H."/>
            <person name="Rudd S."/>
            <person name="Zaccaria P."/>
            <person name="Mewes H.-W."/>
            <person name="Mayer K.F.X."/>
            <person name="Kaul S."/>
            <person name="Town C.D."/>
            <person name="Koo H.L."/>
            <person name="Tallon L.J."/>
            <person name="Jenkins J."/>
            <person name="Rooney T."/>
            <person name="Rizzo M."/>
            <person name="Walts A."/>
            <person name="Utterback T."/>
            <person name="Fujii C.Y."/>
            <person name="Shea T.P."/>
            <person name="Creasy T.H."/>
            <person name="Haas B."/>
            <person name="Maiti R."/>
            <person name="Wu D."/>
            <person name="Peterson J."/>
            <person name="Van Aken S."/>
            <person name="Pai G."/>
            <person name="Militscher J."/>
            <person name="Sellers P."/>
            <person name="Gill J.E."/>
            <person name="Feldblyum T.V."/>
            <person name="Preuss D."/>
            <person name="Lin X."/>
            <person name="Nierman W.C."/>
            <person name="Salzberg S.L."/>
            <person name="White O."/>
            <person name="Venter J.C."/>
            <person name="Fraser C.M."/>
            <person name="Kaneko T."/>
            <person name="Nakamura Y."/>
            <person name="Sato S."/>
            <person name="Kato T."/>
            <person name="Asamizu E."/>
            <person name="Sasamoto S."/>
            <person name="Kimura T."/>
            <person name="Idesawa K."/>
            <person name="Kawashima K."/>
            <person name="Kishida Y."/>
            <person name="Kiyokawa C."/>
            <person name="Kohara M."/>
            <person name="Matsumoto M."/>
            <person name="Matsuno A."/>
            <person name="Muraki A."/>
            <person name="Nakayama S."/>
            <person name="Nakazaki N."/>
            <person name="Shinpo S."/>
            <person name="Takeuchi C."/>
            <person name="Wada T."/>
            <person name="Watanabe A."/>
            <person name="Yamada M."/>
            <person name="Yasuda M."/>
            <person name="Tabata S."/>
        </authorList>
    </citation>
    <scope>NUCLEOTIDE SEQUENCE [LARGE SCALE GENOMIC DNA]</scope>
    <source>
        <strain>cv. Columbia</strain>
    </source>
</reference>
<reference key="2">
    <citation type="journal article" date="2017" name="Plant J.">
        <title>Araport11: a complete reannotation of the Arabidopsis thaliana reference genome.</title>
        <authorList>
            <person name="Cheng C.Y."/>
            <person name="Krishnakumar V."/>
            <person name="Chan A.P."/>
            <person name="Thibaud-Nissen F."/>
            <person name="Schobel S."/>
            <person name="Town C.D."/>
        </authorList>
    </citation>
    <scope>GENOME REANNOTATION</scope>
    <source>
        <strain>cv. Columbia</strain>
    </source>
</reference>
<reference key="3">
    <citation type="submission" date="2004-02" db="EMBL/GenBank/DDBJ databases">
        <title>Arabidopsis ORF clones.</title>
        <authorList>
            <person name="Kim C.J."/>
            <person name="Chen H."/>
            <person name="Cheuk R."/>
            <person name="Shinn P."/>
            <person name="Ecker J.R."/>
        </authorList>
    </citation>
    <scope>NUCLEOTIDE SEQUENCE [LARGE SCALE MRNA]</scope>
    <source>
        <strain>cv. Columbia</strain>
    </source>
</reference>
<reference key="4">
    <citation type="journal article" date="2015" name="Mol. Cell. Proteomics">
        <title>Identification of regulatory and cargo proteins of endosomal and secretory pathways in Arabidopsis thaliana by proteomic dissection.</title>
        <authorList>
            <person name="Heard W."/>
            <person name="Sklenar J."/>
            <person name="Tome D.F."/>
            <person name="Robatzek S."/>
            <person name="Jones A.M."/>
        </authorList>
    </citation>
    <scope>SUBCELLULAR LOCATION</scope>
</reference>
<reference key="5">
    <citation type="journal article" date="2016" name="Nat. Commun.">
        <title>Golgi-localized STELLO proteins regulate the assembly and trafficking of cellulose synthase complexes in Arabidopsis.</title>
        <authorList>
            <person name="Zhang Y."/>
            <person name="Nikolovski N."/>
            <person name="Sorieul M."/>
            <person name="Vellosillo T."/>
            <person name="McFarlane H.E."/>
            <person name="Dupree R."/>
            <person name="Kesten C."/>
            <person name="Schneider R."/>
            <person name="Driemeier C."/>
            <person name="Lathe R."/>
            <person name="Lampugnani E."/>
            <person name="Yu X."/>
            <person name="Ivakov A."/>
            <person name="Doblin M.S."/>
            <person name="Mortimer J.C."/>
            <person name="Brown S.P."/>
            <person name="Persson S."/>
            <person name="Dupree P."/>
        </authorList>
    </citation>
    <scope>LACK OF INTERACTION WITH STL1; STL2; CESA1; CESA3; CESA4; CESA6; CESA7 AND CESA8</scope>
    <scope>SUBUNIT</scope>
</reference>
<evidence type="ECO:0000250" key="1">
    <source>
        <dbReference type="UniProtKB" id="Q6ZVE7"/>
    </source>
</evidence>
<evidence type="ECO:0000255" key="2"/>
<evidence type="ECO:0000269" key="3">
    <source>
    </source>
</evidence>
<evidence type="ECO:0000269" key="4">
    <source>
    </source>
</evidence>
<evidence type="ECO:0000303" key="5">
    <source>
    </source>
</evidence>
<evidence type="ECO:0000305" key="6"/>
<evidence type="ECO:0000312" key="7">
    <source>
        <dbReference type="Araport" id="AT3G03180"/>
    </source>
</evidence>
<evidence type="ECO:0000312" key="8">
    <source>
        <dbReference type="EMBL" id="AAF26123.1"/>
    </source>
</evidence>
<evidence type="ECO:0000312" key="9">
    <source>
        <dbReference type="EMBL" id="AAS47642.1"/>
    </source>
</evidence>
<accession>Q6NMM1</accession>
<accession>Q9M9N7</accession>
<feature type="chain" id="PRO_0000437206" description="Vesicle transport protein GOT1">
    <location>
        <begin position="1"/>
        <end position="140"/>
    </location>
</feature>
<feature type="transmembrane region" description="Helical" evidence="2">
    <location>
        <begin position="12"/>
        <end position="32"/>
    </location>
</feature>
<feature type="transmembrane region" description="Helical" evidence="2">
    <location>
        <begin position="35"/>
        <end position="55"/>
    </location>
</feature>
<feature type="transmembrane region" description="Helical" evidence="2">
    <location>
        <begin position="71"/>
        <end position="91"/>
    </location>
</feature>
<feature type="transmembrane region" description="Helical" evidence="2">
    <location>
        <begin position="96"/>
        <end position="116"/>
    </location>
</feature>
<sequence>MASLEMNDLKKIGLGLTGFGVFFTFLGVIFVFDKGLIAMGNILFLAGVTLTIGINPAIQFFTKRQNFKGTISFGLGFLLVVFGWPIFGLLLESYGFLVLFSGFWPTLAVFLQRIPLLGWLLQQPYIRSLLDRYRGRRVPV</sequence>
<dbReference type="EMBL" id="AC012328">
    <property type="protein sequence ID" value="AAF26123.1"/>
    <property type="status" value="ALT_SEQ"/>
    <property type="molecule type" value="Genomic_DNA"/>
</dbReference>
<dbReference type="EMBL" id="CP002686">
    <property type="protein sequence ID" value="AEE73910.1"/>
    <property type="molecule type" value="Genomic_DNA"/>
</dbReference>
<dbReference type="EMBL" id="BT010925">
    <property type="protein sequence ID" value="AAR24703.1"/>
    <property type="molecule type" value="mRNA"/>
</dbReference>
<dbReference type="EMBL" id="BT011636">
    <property type="protein sequence ID" value="AAS47642.1"/>
    <property type="molecule type" value="mRNA"/>
</dbReference>
<dbReference type="RefSeq" id="NP_186968.2">
    <property type="nucleotide sequence ID" value="NM_111188.4"/>
</dbReference>
<dbReference type="FunCoup" id="Q6NMM1">
    <property type="interactions" value="3497"/>
</dbReference>
<dbReference type="IntAct" id="Q6NMM1">
    <property type="interactions" value="1"/>
</dbReference>
<dbReference type="STRING" id="3702.Q6NMM1"/>
<dbReference type="PaxDb" id="3702-AT3G03180.1"/>
<dbReference type="EnsemblPlants" id="AT3G03180.1">
    <property type="protein sequence ID" value="AT3G03180.1"/>
    <property type="gene ID" value="AT3G03180"/>
</dbReference>
<dbReference type="GeneID" id="821059"/>
<dbReference type="Gramene" id="AT3G03180.1">
    <property type="protein sequence ID" value="AT3G03180.1"/>
    <property type="gene ID" value="AT3G03180"/>
</dbReference>
<dbReference type="KEGG" id="ath:AT3G03180"/>
<dbReference type="Araport" id="AT3G03180"/>
<dbReference type="TAIR" id="AT3G03180">
    <property type="gene designation" value="GOT1"/>
</dbReference>
<dbReference type="eggNOG" id="KOG1743">
    <property type="taxonomic scope" value="Eukaryota"/>
</dbReference>
<dbReference type="HOGENOM" id="CLU_124519_1_0_1"/>
<dbReference type="InParanoid" id="Q6NMM1"/>
<dbReference type="OMA" id="VFGWPIL"/>
<dbReference type="OrthoDB" id="204784at2759"/>
<dbReference type="PhylomeDB" id="Q6NMM1"/>
<dbReference type="PRO" id="PR:Q6NMM1"/>
<dbReference type="Proteomes" id="UP000006548">
    <property type="component" value="Chromosome 3"/>
</dbReference>
<dbReference type="ExpressionAtlas" id="Q6NMM1">
    <property type="expression patterns" value="baseline and differential"/>
</dbReference>
<dbReference type="GO" id="GO:0005829">
    <property type="term" value="C:cytosol"/>
    <property type="evidence" value="ECO:0007669"/>
    <property type="project" value="GOC"/>
</dbReference>
<dbReference type="GO" id="GO:0000139">
    <property type="term" value="C:Golgi membrane"/>
    <property type="evidence" value="ECO:0007669"/>
    <property type="project" value="UniProtKB-SubCell"/>
</dbReference>
<dbReference type="GO" id="GO:0006888">
    <property type="term" value="P:endoplasmic reticulum to Golgi vesicle-mediated transport"/>
    <property type="evidence" value="ECO:0007669"/>
    <property type="project" value="InterPro"/>
</dbReference>
<dbReference type="GO" id="GO:0042147">
    <property type="term" value="P:retrograde transport, endosome to Golgi"/>
    <property type="evidence" value="ECO:0007669"/>
    <property type="project" value="InterPro"/>
</dbReference>
<dbReference type="InterPro" id="IPR045176">
    <property type="entry name" value="Got1"/>
</dbReference>
<dbReference type="InterPro" id="IPR007305">
    <property type="entry name" value="Vesicle_transpt_Got1/SFT2"/>
</dbReference>
<dbReference type="PANTHER" id="PTHR21493">
    <property type="entry name" value="CGI-141-RELATED/LIPASE CONTAINING PROTEIN"/>
    <property type="match status" value="1"/>
</dbReference>
<dbReference type="PANTHER" id="PTHR21493:SF247">
    <property type="entry name" value="VESICLE TRANSPORT PROTEIN GOT1"/>
    <property type="match status" value="1"/>
</dbReference>
<dbReference type="Pfam" id="PF04178">
    <property type="entry name" value="Got1"/>
    <property type="match status" value="1"/>
</dbReference>
<proteinExistence type="evidence at protein level"/>
<protein>
    <recommendedName>
        <fullName evidence="5">Vesicle transport protein GOT1</fullName>
    </recommendedName>
    <alternativeName>
        <fullName evidence="5">Golgi transport 1</fullName>
    </alternativeName>
</protein>
<keyword id="KW-0333">Golgi apparatus</keyword>
<keyword id="KW-0472">Membrane</keyword>
<keyword id="KW-1185">Reference proteome</keyword>
<keyword id="KW-0812">Transmembrane</keyword>
<keyword id="KW-1133">Transmembrane helix</keyword>
<comment type="function">
    <text evidence="1">May be involved in fusion of ER-derived transport vesicles with the Golgi complex.</text>
</comment>
<comment type="subunit">
    <text evidence="4">Homodimer. No interactions with STL1, STL2, CESA1, CESA3, CESA4, CESA6, CESA7 or CESA8.</text>
</comment>
<comment type="subcellular location">
    <subcellularLocation>
        <location evidence="3">Golgi apparatus membrane</location>
        <topology evidence="2">Multi-pass membrane protein</topology>
    </subcellularLocation>
</comment>
<comment type="similarity">
    <text evidence="6">Belongs to the GOT1 family.</text>
</comment>
<comment type="sequence caution" evidence="6">
    <conflict type="erroneous gene model prediction">
        <sequence resource="EMBL-CDS" id="AAF26123"/>
    </conflict>
</comment>
<organism evidence="9">
    <name type="scientific">Arabidopsis thaliana</name>
    <name type="common">Mouse-ear cress</name>
    <dbReference type="NCBI Taxonomy" id="3702"/>
    <lineage>
        <taxon>Eukaryota</taxon>
        <taxon>Viridiplantae</taxon>
        <taxon>Streptophyta</taxon>
        <taxon>Embryophyta</taxon>
        <taxon>Tracheophyta</taxon>
        <taxon>Spermatophyta</taxon>
        <taxon>Magnoliopsida</taxon>
        <taxon>eudicotyledons</taxon>
        <taxon>Gunneridae</taxon>
        <taxon>Pentapetalae</taxon>
        <taxon>rosids</taxon>
        <taxon>malvids</taxon>
        <taxon>Brassicales</taxon>
        <taxon>Brassicaceae</taxon>
        <taxon>Camelineae</taxon>
        <taxon>Arabidopsis</taxon>
    </lineage>
</organism>
<gene>
    <name evidence="5" type="primary">GOT1</name>
    <name evidence="7" type="ordered locus">At3g03180</name>
    <name evidence="8" type="ORF">T17B22.13</name>
</gene>
<name>GOT1_ARATH</name>